<organism>
    <name type="scientific">Mycobacterium avium (strain 104)</name>
    <dbReference type="NCBI Taxonomy" id="243243"/>
    <lineage>
        <taxon>Bacteria</taxon>
        <taxon>Bacillati</taxon>
        <taxon>Actinomycetota</taxon>
        <taxon>Actinomycetes</taxon>
        <taxon>Mycobacteriales</taxon>
        <taxon>Mycobacteriaceae</taxon>
        <taxon>Mycobacterium</taxon>
        <taxon>Mycobacterium avium complex (MAC)</taxon>
    </lineage>
</organism>
<dbReference type="EC" id="2.3.1.181" evidence="1"/>
<dbReference type="EMBL" id="CP000479">
    <property type="protein sequence ID" value="ABK67127.1"/>
    <property type="molecule type" value="Genomic_DNA"/>
</dbReference>
<dbReference type="RefSeq" id="WP_011724696.1">
    <property type="nucleotide sequence ID" value="NC_008595.1"/>
</dbReference>
<dbReference type="SMR" id="A0QEY7"/>
<dbReference type="KEGG" id="mav:MAV_2271"/>
<dbReference type="HOGENOM" id="CLU_035168_2_1_11"/>
<dbReference type="UniPathway" id="UPA00538">
    <property type="reaction ID" value="UER00592"/>
</dbReference>
<dbReference type="Proteomes" id="UP000001574">
    <property type="component" value="Chromosome"/>
</dbReference>
<dbReference type="GO" id="GO:0005737">
    <property type="term" value="C:cytoplasm"/>
    <property type="evidence" value="ECO:0007669"/>
    <property type="project" value="UniProtKB-SubCell"/>
</dbReference>
<dbReference type="GO" id="GO:0033819">
    <property type="term" value="F:lipoyl(octanoyl) transferase activity"/>
    <property type="evidence" value="ECO:0007669"/>
    <property type="project" value="UniProtKB-EC"/>
</dbReference>
<dbReference type="GO" id="GO:0036211">
    <property type="term" value="P:protein modification process"/>
    <property type="evidence" value="ECO:0007669"/>
    <property type="project" value="InterPro"/>
</dbReference>
<dbReference type="CDD" id="cd16444">
    <property type="entry name" value="LipB"/>
    <property type="match status" value="1"/>
</dbReference>
<dbReference type="FunFam" id="3.30.930.10:FF:000035">
    <property type="entry name" value="Putative lipoyltransferase 2, mitochondrial"/>
    <property type="match status" value="1"/>
</dbReference>
<dbReference type="Gene3D" id="3.30.930.10">
    <property type="entry name" value="Bira Bifunctional Protein, Domain 2"/>
    <property type="match status" value="1"/>
</dbReference>
<dbReference type="HAMAP" id="MF_00013">
    <property type="entry name" value="LipB"/>
    <property type="match status" value="1"/>
</dbReference>
<dbReference type="InterPro" id="IPR045864">
    <property type="entry name" value="aa-tRNA-synth_II/BPL/LPL"/>
</dbReference>
<dbReference type="InterPro" id="IPR004143">
    <property type="entry name" value="BPL_LPL_catalytic"/>
</dbReference>
<dbReference type="InterPro" id="IPR000544">
    <property type="entry name" value="Octanoyltransferase"/>
</dbReference>
<dbReference type="InterPro" id="IPR020605">
    <property type="entry name" value="Octanoyltransferase_CS"/>
</dbReference>
<dbReference type="NCBIfam" id="TIGR00214">
    <property type="entry name" value="lipB"/>
    <property type="match status" value="1"/>
</dbReference>
<dbReference type="NCBIfam" id="NF010925">
    <property type="entry name" value="PRK14345.1"/>
    <property type="match status" value="1"/>
</dbReference>
<dbReference type="PANTHER" id="PTHR10993:SF7">
    <property type="entry name" value="LIPOYLTRANSFERASE 2, MITOCHONDRIAL-RELATED"/>
    <property type="match status" value="1"/>
</dbReference>
<dbReference type="PANTHER" id="PTHR10993">
    <property type="entry name" value="OCTANOYLTRANSFERASE"/>
    <property type="match status" value="1"/>
</dbReference>
<dbReference type="Pfam" id="PF21948">
    <property type="entry name" value="LplA-B_cat"/>
    <property type="match status" value="1"/>
</dbReference>
<dbReference type="PIRSF" id="PIRSF016262">
    <property type="entry name" value="LPLase"/>
    <property type="match status" value="1"/>
</dbReference>
<dbReference type="SUPFAM" id="SSF55681">
    <property type="entry name" value="Class II aaRS and biotin synthetases"/>
    <property type="match status" value="1"/>
</dbReference>
<dbReference type="PROSITE" id="PS51733">
    <property type="entry name" value="BPL_LPL_CATALYTIC"/>
    <property type="match status" value="1"/>
</dbReference>
<dbReference type="PROSITE" id="PS01313">
    <property type="entry name" value="LIPB"/>
    <property type="match status" value="1"/>
</dbReference>
<protein>
    <recommendedName>
        <fullName evidence="1">Octanoyltransferase</fullName>
        <ecNumber evidence="1">2.3.1.181</ecNumber>
    </recommendedName>
    <alternativeName>
        <fullName evidence="1">Lipoate-protein ligase B</fullName>
    </alternativeName>
    <alternativeName>
        <fullName evidence="1">Lipoyl/octanoyl transferase</fullName>
    </alternativeName>
    <alternativeName>
        <fullName evidence="1">Octanoyl-[acyl-carrier-protein]-protein N-octanoyltransferase</fullName>
    </alternativeName>
</protein>
<evidence type="ECO:0000255" key="1">
    <source>
        <dbReference type="HAMAP-Rule" id="MF_00013"/>
    </source>
</evidence>
<evidence type="ECO:0000255" key="2">
    <source>
        <dbReference type="PROSITE-ProRule" id="PRU01067"/>
    </source>
</evidence>
<evidence type="ECO:0000256" key="3">
    <source>
        <dbReference type="SAM" id="MobiDB-lite"/>
    </source>
</evidence>
<keyword id="KW-0012">Acyltransferase</keyword>
<keyword id="KW-0963">Cytoplasm</keyword>
<keyword id="KW-0808">Transferase</keyword>
<feature type="chain" id="PRO_1000001107" description="Octanoyltransferase">
    <location>
        <begin position="1"/>
        <end position="233"/>
    </location>
</feature>
<feature type="domain" description="BPL/LPL catalytic" evidence="2">
    <location>
        <begin position="38"/>
        <end position="218"/>
    </location>
</feature>
<feature type="region of interest" description="Disordered" evidence="3">
    <location>
        <begin position="57"/>
        <end position="77"/>
    </location>
</feature>
<feature type="compositionally biased region" description="Basic and acidic residues" evidence="3">
    <location>
        <begin position="57"/>
        <end position="66"/>
    </location>
</feature>
<feature type="active site" description="Acyl-thioester intermediate" evidence="1">
    <location>
        <position position="179"/>
    </location>
</feature>
<feature type="binding site" evidence="1">
    <location>
        <begin position="76"/>
        <end position="83"/>
    </location>
    <ligand>
        <name>substrate</name>
    </ligand>
</feature>
<feature type="binding site" evidence="1">
    <location>
        <begin position="148"/>
        <end position="150"/>
    </location>
    <ligand>
        <name>substrate</name>
    </ligand>
</feature>
<feature type="binding site" evidence="1">
    <location>
        <begin position="161"/>
        <end position="163"/>
    </location>
    <ligand>
        <name>substrate</name>
    </ligand>
</feature>
<feature type="site" description="Lowers pKa of active site Cys" evidence="1">
    <location>
        <position position="145"/>
    </location>
</feature>
<accession>A0QEY7</accession>
<gene>
    <name evidence="1" type="primary">lipB</name>
    <name type="ordered locus">MAV_2271</name>
</gene>
<reference key="1">
    <citation type="submission" date="2006-10" db="EMBL/GenBank/DDBJ databases">
        <authorList>
            <person name="Fleischmann R.D."/>
            <person name="Dodson R.J."/>
            <person name="Haft D.H."/>
            <person name="Merkel J.S."/>
            <person name="Nelson W.C."/>
            <person name="Fraser C.M."/>
        </authorList>
    </citation>
    <scope>NUCLEOTIDE SEQUENCE [LARGE SCALE GENOMIC DNA]</scope>
    <source>
        <strain>104</strain>
    </source>
</reference>
<comment type="function">
    <text evidence="1">Catalyzes the transfer of endogenously produced octanoic acid from octanoyl-acyl-carrier-protein onto the lipoyl domains of lipoate-dependent enzymes. Lipoyl-ACP can also act as a substrate although octanoyl-ACP is likely to be the physiological substrate.</text>
</comment>
<comment type="catalytic activity">
    <reaction evidence="1">
        <text>octanoyl-[ACP] + L-lysyl-[protein] = N(6)-octanoyl-L-lysyl-[protein] + holo-[ACP] + H(+)</text>
        <dbReference type="Rhea" id="RHEA:17665"/>
        <dbReference type="Rhea" id="RHEA-COMP:9636"/>
        <dbReference type="Rhea" id="RHEA-COMP:9685"/>
        <dbReference type="Rhea" id="RHEA-COMP:9752"/>
        <dbReference type="Rhea" id="RHEA-COMP:9928"/>
        <dbReference type="ChEBI" id="CHEBI:15378"/>
        <dbReference type="ChEBI" id="CHEBI:29969"/>
        <dbReference type="ChEBI" id="CHEBI:64479"/>
        <dbReference type="ChEBI" id="CHEBI:78463"/>
        <dbReference type="ChEBI" id="CHEBI:78809"/>
        <dbReference type="EC" id="2.3.1.181"/>
    </reaction>
</comment>
<comment type="pathway">
    <text evidence="1">Protein modification; protein lipoylation via endogenous pathway; protein N(6)-(lipoyl)lysine from octanoyl-[acyl-carrier-protein]: step 1/2.</text>
</comment>
<comment type="subcellular location">
    <subcellularLocation>
        <location evidence="1">Cytoplasm</location>
    </subcellularLocation>
</comment>
<comment type="miscellaneous">
    <text evidence="1">In the reaction, the free carboxyl group of octanoic acid is attached via an amide linkage to the epsilon-amino group of a specific lysine residue of lipoyl domains of lipoate-dependent enzymes.</text>
</comment>
<comment type="similarity">
    <text evidence="1">Belongs to the LipB family.</text>
</comment>
<sequence>MIDSIRSSRALIDVRRLGTVDYRAAWQQQRDLADARVAGGPDTLLLLQHPAVYTAGRRTEPHERPLDGTPVVDTDRGGKITWHGPGQLVGYPIIGLAEPLDVVDYVRRLEEALIKVCADLGLDTVRVPGRSGVWVPGDAGRPDRKVAAIGVRVSRATTLHGFALNCDCDLGAFSAIVPCGISDAGVTSLTAELRRPVAVDDVVTSVADLVCDALDGVLPVREHSPGARVASAM</sequence>
<proteinExistence type="inferred from homology"/>
<name>LIPB_MYCA1</name>